<organism>
    <name type="scientific">Methanococcus maripaludis (strain C5 / ATCC BAA-1333)</name>
    <dbReference type="NCBI Taxonomy" id="402880"/>
    <lineage>
        <taxon>Archaea</taxon>
        <taxon>Methanobacteriati</taxon>
        <taxon>Methanobacteriota</taxon>
        <taxon>Methanomada group</taxon>
        <taxon>Methanococci</taxon>
        <taxon>Methanococcales</taxon>
        <taxon>Methanococcaceae</taxon>
        <taxon>Methanococcus</taxon>
    </lineage>
</organism>
<keyword id="KW-0687">Ribonucleoprotein</keyword>
<keyword id="KW-0689">Ribosomal protein</keyword>
<protein>
    <recommendedName>
        <fullName evidence="1">Small ribosomal subunit protein eS17</fullName>
    </recommendedName>
    <alternativeName>
        <fullName evidence="2">30S ribosomal protein S17e</fullName>
    </alternativeName>
</protein>
<proteinExistence type="inferred from homology"/>
<feature type="chain" id="PRO_1000050625" description="Small ribosomal subunit protein eS17">
    <location>
        <begin position="1"/>
        <end position="63"/>
    </location>
</feature>
<gene>
    <name evidence="1" type="primary">rps17e</name>
    <name type="ordered locus">MmarC5_1030</name>
</gene>
<comment type="similarity">
    <text evidence="1">Belongs to the eukaryotic ribosomal protein eS17 family.</text>
</comment>
<evidence type="ECO:0000255" key="1">
    <source>
        <dbReference type="HAMAP-Rule" id="MF_00511"/>
    </source>
</evidence>
<evidence type="ECO:0000305" key="2"/>
<accession>A4FYQ2</accession>
<dbReference type="EMBL" id="CP000609">
    <property type="protein sequence ID" value="ABO35336.1"/>
    <property type="molecule type" value="Genomic_DNA"/>
</dbReference>
<dbReference type="RefSeq" id="WP_011868789.1">
    <property type="nucleotide sequence ID" value="NC_009135.1"/>
</dbReference>
<dbReference type="SMR" id="A4FYQ2"/>
<dbReference type="STRING" id="402880.MmarC5_1030"/>
<dbReference type="GeneID" id="4928541"/>
<dbReference type="KEGG" id="mmq:MmarC5_1030"/>
<dbReference type="eggNOG" id="arCOG01885">
    <property type="taxonomic scope" value="Archaea"/>
</dbReference>
<dbReference type="HOGENOM" id="CLU_176720_0_1_2"/>
<dbReference type="OrthoDB" id="52479at2157"/>
<dbReference type="Proteomes" id="UP000000253">
    <property type="component" value="Chromosome"/>
</dbReference>
<dbReference type="GO" id="GO:0005829">
    <property type="term" value="C:cytosol"/>
    <property type="evidence" value="ECO:0007669"/>
    <property type="project" value="UniProtKB-ARBA"/>
</dbReference>
<dbReference type="GO" id="GO:1990904">
    <property type="term" value="C:ribonucleoprotein complex"/>
    <property type="evidence" value="ECO:0007669"/>
    <property type="project" value="UniProtKB-KW"/>
</dbReference>
<dbReference type="GO" id="GO:0005840">
    <property type="term" value="C:ribosome"/>
    <property type="evidence" value="ECO:0007669"/>
    <property type="project" value="UniProtKB-KW"/>
</dbReference>
<dbReference type="GO" id="GO:0003735">
    <property type="term" value="F:structural constituent of ribosome"/>
    <property type="evidence" value="ECO:0007669"/>
    <property type="project" value="InterPro"/>
</dbReference>
<dbReference type="GO" id="GO:0006412">
    <property type="term" value="P:translation"/>
    <property type="evidence" value="ECO:0007669"/>
    <property type="project" value="UniProtKB-UniRule"/>
</dbReference>
<dbReference type="Gene3D" id="1.10.60.20">
    <property type="entry name" value="Ribosomal protein S17e-like"/>
    <property type="match status" value="1"/>
</dbReference>
<dbReference type="HAMAP" id="MF_00511">
    <property type="entry name" value="Ribosomal_eS17"/>
    <property type="match status" value="1"/>
</dbReference>
<dbReference type="InterPro" id="IPR001210">
    <property type="entry name" value="Ribosomal_eS17"/>
</dbReference>
<dbReference type="InterPro" id="IPR018273">
    <property type="entry name" value="Ribosomal_eS17_CS"/>
</dbReference>
<dbReference type="InterPro" id="IPR036401">
    <property type="entry name" value="Ribosomal_eS17_sf"/>
</dbReference>
<dbReference type="NCBIfam" id="NF002242">
    <property type="entry name" value="PRK01151.1"/>
    <property type="match status" value="1"/>
</dbReference>
<dbReference type="PANTHER" id="PTHR10732">
    <property type="entry name" value="40S RIBOSOMAL PROTEIN S17"/>
    <property type="match status" value="1"/>
</dbReference>
<dbReference type="PANTHER" id="PTHR10732:SF0">
    <property type="entry name" value="40S RIBOSOMAL PROTEIN S17"/>
    <property type="match status" value="1"/>
</dbReference>
<dbReference type="Pfam" id="PF00833">
    <property type="entry name" value="Ribosomal_S17e"/>
    <property type="match status" value="1"/>
</dbReference>
<dbReference type="SUPFAM" id="SSF116820">
    <property type="entry name" value="Rps17e-like"/>
    <property type="match status" value="1"/>
</dbReference>
<dbReference type="PROSITE" id="PS00712">
    <property type="entry name" value="RIBOSOMAL_S17E"/>
    <property type="match status" value="1"/>
</dbReference>
<name>RS17E_METM5</name>
<sequence length="63" mass="7255">MGRIRQTFIKRTGEELIEKFADKFTSDFEENKKAVEEVAMISTKTLRNRVAGYVTAKVKKMNA</sequence>
<reference key="1">
    <citation type="submission" date="2007-03" db="EMBL/GenBank/DDBJ databases">
        <title>Complete sequence of chromosome of Methanococcus maripaludis C5.</title>
        <authorList>
            <consortium name="US DOE Joint Genome Institute"/>
            <person name="Copeland A."/>
            <person name="Lucas S."/>
            <person name="Lapidus A."/>
            <person name="Barry K."/>
            <person name="Glavina del Rio T."/>
            <person name="Dalin E."/>
            <person name="Tice H."/>
            <person name="Pitluck S."/>
            <person name="Chertkov O."/>
            <person name="Brettin T."/>
            <person name="Bruce D."/>
            <person name="Han C."/>
            <person name="Detter J.C."/>
            <person name="Schmutz J."/>
            <person name="Larimer F."/>
            <person name="Land M."/>
            <person name="Hauser L."/>
            <person name="Kyrpides N."/>
            <person name="Mikhailova N."/>
            <person name="Sieprawska-Lupa M."/>
            <person name="Whitman W.B."/>
            <person name="Richardson P."/>
        </authorList>
    </citation>
    <scope>NUCLEOTIDE SEQUENCE [LARGE SCALE GENOMIC DNA]</scope>
    <source>
        <strain>C5 / ATCC BAA-1333</strain>
    </source>
</reference>